<sequence>MAGHSKWANIQHKKARQDAKRGKIFTRLIKEITVAARMGGGDPGSNPRLRLALEKAAENNMPKDNVQRAIDKGTGNLEGVEYIELRYEGYGIGGAALMVDCLTDNKTRTVADVRHAFTKNGGNLGTDGCVAFNFVHQGYLVFEPGVDEDALMEAALEAGAEDVVTNDDGSIEVITAPNDWAGVKSALEAAGYKSVDGDVTMRAQNETELSGDDAVKMQKLIDALEDLDDVQDVYTSAVLNLD</sequence>
<accession>Q9JYC7</accession>
<protein>
    <recommendedName>
        <fullName evidence="1">Probable transcriptional regulatory protein NMB1648</fullName>
    </recommendedName>
</protein>
<gene>
    <name type="ordered locus">NMB1648</name>
</gene>
<keyword id="KW-0963">Cytoplasm</keyword>
<keyword id="KW-0238">DNA-binding</keyword>
<keyword id="KW-1185">Reference proteome</keyword>
<keyword id="KW-0804">Transcription</keyword>
<keyword id="KW-0805">Transcription regulation</keyword>
<comment type="subcellular location">
    <subcellularLocation>
        <location evidence="1">Cytoplasm</location>
    </subcellularLocation>
</comment>
<comment type="similarity">
    <text evidence="1">Belongs to the TACO1 family.</text>
</comment>
<feature type="chain" id="PRO_0000175856" description="Probable transcriptional regulatory protein NMB1648">
    <location>
        <begin position="1"/>
        <end position="242"/>
    </location>
</feature>
<evidence type="ECO:0000255" key="1">
    <source>
        <dbReference type="HAMAP-Rule" id="MF_00693"/>
    </source>
</evidence>
<name>Y1648_NEIMB</name>
<reference key="1">
    <citation type="journal article" date="2000" name="Science">
        <title>Complete genome sequence of Neisseria meningitidis serogroup B strain MC58.</title>
        <authorList>
            <person name="Tettelin H."/>
            <person name="Saunders N.J."/>
            <person name="Heidelberg J.F."/>
            <person name="Jeffries A.C."/>
            <person name="Nelson K.E."/>
            <person name="Eisen J.A."/>
            <person name="Ketchum K.A."/>
            <person name="Hood D.W."/>
            <person name="Peden J.F."/>
            <person name="Dodson R.J."/>
            <person name="Nelson W.C."/>
            <person name="Gwinn M.L."/>
            <person name="DeBoy R.T."/>
            <person name="Peterson J.D."/>
            <person name="Hickey E.K."/>
            <person name="Haft D.H."/>
            <person name="Salzberg S.L."/>
            <person name="White O."/>
            <person name="Fleischmann R.D."/>
            <person name="Dougherty B.A."/>
            <person name="Mason T.M."/>
            <person name="Ciecko A."/>
            <person name="Parksey D.S."/>
            <person name="Blair E."/>
            <person name="Cittone H."/>
            <person name="Clark E.B."/>
            <person name="Cotton M.D."/>
            <person name="Utterback T.R."/>
            <person name="Khouri H.M."/>
            <person name="Qin H."/>
            <person name="Vamathevan J.J."/>
            <person name="Gill J."/>
            <person name="Scarlato V."/>
            <person name="Masignani V."/>
            <person name="Pizza M."/>
            <person name="Grandi G."/>
            <person name="Sun L."/>
            <person name="Smith H.O."/>
            <person name="Fraser C.M."/>
            <person name="Moxon E.R."/>
            <person name="Rappuoli R."/>
            <person name="Venter J.C."/>
        </authorList>
    </citation>
    <scope>NUCLEOTIDE SEQUENCE [LARGE SCALE GENOMIC DNA]</scope>
    <source>
        <strain>ATCC BAA-335 / MC58</strain>
    </source>
</reference>
<dbReference type="EMBL" id="AE002098">
    <property type="protein sequence ID" value="AAF41997.1"/>
    <property type="molecule type" value="Genomic_DNA"/>
</dbReference>
<dbReference type="PIR" id="G81058">
    <property type="entry name" value="G81058"/>
</dbReference>
<dbReference type="RefSeq" id="NP_274653.1">
    <property type="nucleotide sequence ID" value="NC_003112.2"/>
</dbReference>
<dbReference type="RefSeq" id="WP_002216723.1">
    <property type="nucleotide sequence ID" value="NC_003112.2"/>
</dbReference>
<dbReference type="SMR" id="Q9JYC7"/>
<dbReference type="FunCoup" id="Q9JYC7">
    <property type="interactions" value="499"/>
</dbReference>
<dbReference type="STRING" id="122586.NMB1648"/>
<dbReference type="PaxDb" id="122586-NMB1648"/>
<dbReference type="KEGG" id="nme:NMB1648"/>
<dbReference type="PATRIC" id="fig|122586.8.peg.2120"/>
<dbReference type="HOGENOM" id="CLU_062974_2_2_4"/>
<dbReference type="InParanoid" id="Q9JYC7"/>
<dbReference type="OrthoDB" id="9781053at2"/>
<dbReference type="Proteomes" id="UP000000425">
    <property type="component" value="Chromosome"/>
</dbReference>
<dbReference type="GO" id="GO:0005829">
    <property type="term" value="C:cytosol"/>
    <property type="evidence" value="ECO:0000318"/>
    <property type="project" value="GO_Central"/>
</dbReference>
<dbReference type="GO" id="GO:0003677">
    <property type="term" value="F:DNA binding"/>
    <property type="evidence" value="ECO:0007669"/>
    <property type="project" value="UniProtKB-UniRule"/>
</dbReference>
<dbReference type="GO" id="GO:0006355">
    <property type="term" value="P:regulation of DNA-templated transcription"/>
    <property type="evidence" value="ECO:0007669"/>
    <property type="project" value="UniProtKB-UniRule"/>
</dbReference>
<dbReference type="FunFam" id="1.10.10.200:FF:000001">
    <property type="entry name" value="Probable transcriptional regulatory protein YebC"/>
    <property type="match status" value="1"/>
</dbReference>
<dbReference type="FunFam" id="3.30.70.980:FF:000002">
    <property type="entry name" value="Probable transcriptional regulatory protein YebC"/>
    <property type="match status" value="1"/>
</dbReference>
<dbReference type="Gene3D" id="1.10.10.200">
    <property type="match status" value="1"/>
</dbReference>
<dbReference type="Gene3D" id="3.30.70.980">
    <property type="match status" value="2"/>
</dbReference>
<dbReference type="HAMAP" id="MF_00693">
    <property type="entry name" value="Transcrip_reg_TACO1"/>
    <property type="match status" value="1"/>
</dbReference>
<dbReference type="InterPro" id="IPR017856">
    <property type="entry name" value="Integrase-like_N"/>
</dbReference>
<dbReference type="InterPro" id="IPR048300">
    <property type="entry name" value="TACO1_YebC-like_2nd/3rd_dom"/>
</dbReference>
<dbReference type="InterPro" id="IPR049083">
    <property type="entry name" value="TACO1_YebC_N"/>
</dbReference>
<dbReference type="InterPro" id="IPR002876">
    <property type="entry name" value="Transcrip_reg_TACO1-like"/>
</dbReference>
<dbReference type="InterPro" id="IPR026564">
    <property type="entry name" value="Transcrip_reg_TACO1-like_dom3"/>
</dbReference>
<dbReference type="InterPro" id="IPR029072">
    <property type="entry name" value="YebC-like"/>
</dbReference>
<dbReference type="NCBIfam" id="NF001030">
    <property type="entry name" value="PRK00110.1"/>
    <property type="match status" value="1"/>
</dbReference>
<dbReference type="NCBIfam" id="NF009044">
    <property type="entry name" value="PRK12378.1"/>
    <property type="match status" value="1"/>
</dbReference>
<dbReference type="NCBIfam" id="TIGR01033">
    <property type="entry name" value="YebC/PmpR family DNA-binding transcriptional regulator"/>
    <property type="match status" value="1"/>
</dbReference>
<dbReference type="PANTHER" id="PTHR12532:SF6">
    <property type="entry name" value="TRANSCRIPTIONAL REGULATORY PROTEIN YEBC-RELATED"/>
    <property type="match status" value="1"/>
</dbReference>
<dbReference type="PANTHER" id="PTHR12532">
    <property type="entry name" value="TRANSLATIONAL ACTIVATOR OF CYTOCHROME C OXIDASE 1"/>
    <property type="match status" value="1"/>
</dbReference>
<dbReference type="Pfam" id="PF20772">
    <property type="entry name" value="TACO1_YebC_N"/>
    <property type="match status" value="1"/>
</dbReference>
<dbReference type="Pfam" id="PF01709">
    <property type="entry name" value="Transcrip_reg"/>
    <property type="match status" value="1"/>
</dbReference>
<dbReference type="SUPFAM" id="SSF75625">
    <property type="entry name" value="YebC-like"/>
    <property type="match status" value="1"/>
</dbReference>
<organism>
    <name type="scientific">Neisseria meningitidis serogroup B (strain ATCC BAA-335 / MC58)</name>
    <dbReference type="NCBI Taxonomy" id="122586"/>
    <lineage>
        <taxon>Bacteria</taxon>
        <taxon>Pseudomonadati</taxon>
        <taxon>Pseudomonadota</taxon>
        <taxon>Betaproteobacteria</taxon>
        <taxon>Neisseriales</taxon>
        <taxon>Neisseriaceae</taxon>
        <taxon>Neisseria</taxon>
    </lineage>
</organism>
<proteinExistence type="inferred from homology"/>